<comment type="function">
    <text evidence="1">One of the primary rRNA binding proteins, it binds directly to 16S rRNA central domain where it helps coordinate assembly of the platform of the 30S subunit.</text>
</comment>
<comment type="subunit">
    <text evidence="1">Part of the 30S ribosomal subunit. Contacts proteins S5 and S12.</text>
</comment>
<comment type="similarity">
    <text evidence="1">Belongs to the universal ribosomal protein uS8 family.</text>
</comment>
<reference key="1">
    <citation type="submission" date="2008-10" db="EMBL/GenBank/DDBJ databases">
        <title>Genome sequence of Bacillus cereus AH820.</title>
        <authorList>
            <person name="Dodson R.J."/>
            <person name="Durkin A.S."/>
            <person name="Rosovitz M.J."/>
            <person name="Rasko D.A."/>
            <person name="Hoffmaster A."/>
            <person name="Ravel J."/>
            <person name="Sutton G."/>
        </authorList>
    </citation>
    <scope>NUCLEOTIDE SEQUENCE [LARGE SCALE GENOMIC DNA]</scope>
    <source>
        <strain>AH820</strain>
    </source>
</reference>
<gene>
    <name evidence="1" type="primary">rpsH</name>
    <name type="ordered locus">BCAH820_0136</name>
</gene>
<organism>
    <name type="scientific">Bacillus cereus (strain AH820)</name>
    <dbReference type="NCBI Taxonomy" id="405535"/>
    <lineage>
        <taxon>Bacteria</taxon>
        <taxon>Bacillati</taxon>
        <taxon>Bacillota</taxon>
        <taxon>Bacilli</taxon>
        <taxon>Bacillales</taxon>
        <taxon>Bacillaceae</taxon>
        <taxon>Bacillus</taxon>
        <taxon>Bacillus cereus group</taxon>
    </lineage>
</organism>
<keyword id="KW-0687">Ribonucleoprotein</keyword>
<keyword id="KW-0689">Ribosomal protein</keyword>
<keyword id="KW-0694">RNA-binding</keyword>
<keyword id="KW-0699">rRNA-binding</keyword>
<dbReference type="EMBL" id="CP001283">
    <property type="protein sequence ID" value="ACK92411.1"/>
    <property type="molecule type" value="Genomic_DNA"/>
</dbReference>
<dbReference type="RefSeq" id="WP_000245511.1">
    <property type="nucleotide sequence ID" value="NC_011773.1"/>
</dbReference>
<dbReference type="SMR" id="B7JKD3"/>
<dbReference type="GeneID" id="93010929"/>
<dbReference type="KEGG" id="bcu:BCAH820_0136"/>
<dbReference type="HOGENOM" id="CLU_098428_0_2_9"/>
<dbReference type="Proteomes" id="UP000001363">
    <property type="component" value="Chromosome"/>
</dbReference>
<dbReference type="GO" id="GO:1990904">
    <property type="term" value="C:ribonucleoprotein complex"/>
    <property type="evidence" value="ECO:0007669"/>
    <property type="project" value="UniProtKB-KW"/>
</dbReference>
<dbReference type="GO" id="GO:0005840">
    <property type="term" value="C:ribosome"/>
    <property type="evidence" value="ECO:0007669"/>
    <property type="project" value="UniProtKB-KW"/>
</dbReference>
<dbReference type="GO" id="GO:0019843">
    <property type="term" value="F:rRNA binding"/>
    <property type="evidence" value="ECO:0007669"/>
    <property type="project" value="UniProtKB-UniRule"/>
</dbReference>
<dbReference type="GO" id="GO:0003735">
    <property type="term" value="F:structural constituent of ribosome"/>
    <property type="evidence" value="ECO:0007669"/>
    <property type="project" value="InterPro"/>
</dbReference>
<dbReference type="GO" id="GO:0006412">
    <property type="term" value="P:translation"/>
    <property type="evidence" value="ECO:0007669"/>
    <property type="project" value="UniProtKB-UniRule"/>
</dbReference>
<dbReference type="FunFam" id="3.30.1370.30:FF:000002">
    <property type="entry name" value="30S ribosomal protein S8"/>
    <property type="match status" value="1"/>
</dbReference>
<dbReference type="FunFam" id="3.30.1490.10:FF:000001">
    <property type="entry name" value="30S ribosomal protein S8"/>
    <property type="match status" value="1"/>
</dbReference>
<dbReference type="Gene3D" id="3.30.1370.30">
    <property type="match status" value="1"/>
</dbReference>
<dbReference type="Gene3D" id="3.30.1490.10">
    <property type="match status" value="1"/>
</dbReference>
<dbReference type="HAMAP" id="MF_01302_B">
    <property type="entry name" value="Ribosomal_uS8_B"/>
    <property type="match status" value="1"/>
</dbReference>
<dbReference type="InterPro" id="IPR000630">
    <property type="entry name" value="Ribosomal_uS8"/>
</dbReference>
<dbReference type="InterPro" id="IPR047863">
    <property type="entry name" value="Ribosomal_uS8_CS"/>
</dbReference>
<dbReference type="InterPro" id="IPR035987">
    <property type="entry name" value="Ribosomal_uS8_sf"/>
</dbReference>
<dbReference type="NCBIfam" id="NF001109">
    <property type="entry name" value="PRK00136.1"/>
    <property type="match status" value="1"/>
</dbReference>
<dbReference type="PANTHER" id="PTHR11758">
    <property type="entry name" value="40S RIBOSOMAL PROTEIN S15A"/>
    <property type="match status" value="1"/>
</dbReference>
<dbReference type="Pfam" id="PF00410">
    <property type="entry name" value="Ribosomal_S8"/>
    <property type="match status" value="1"/>
</dbReference>
<dbReference type="SUPFAM" id="SSF56047">
    <property type="entry name" value="Ribosomal protein S8"/>
    <property type="match status" value="1"/>
</dbReference>
<dbReference type="PROSITE" id="PS00053">
    <property type="entry name" value="RIBOSOMAL_S8"/>
    <property type="match status" value="1"/>
</dbReference>
<accession>B7JKD3</accession>
<name>RS8_BACC0</name>
<evidence type="ECO:0000255" key="1">
    <source>
        <dbReference type="HAMAP-Rule" id="MF_01302"/>
    </source>
</evidence>
<evidence type="ECO:0000305" key="2"/>
<protein>
    <recommendedName>
        <fullName evidence="1">Small ribosomal subunit protein uS8</fullName>
    </recommendedName>
    <alternativeName>
        <fullName evidence="2">30S ribosomal protein S8</fullName>
    </alternativeName>
</protein>
<feature type="chain" id="PRO_1000140509" description="Small ribosomal subunit protein uS8">
    <location>
        <begin position="1"/>
        <end position="132"/>
    </location>
</feature>
<proteinExistence type="inferred from homology"/>
<sequence>MVMTDPIADMLTRIRNANMVRHEKLEVPASKIKKEIAELLKREGFIRDVEYIEDNKQGILRIFLKYGANNERVITGLKRISKPGLRVYAKADEVPRVLNGLGIALVSTSKGVMTDKDARQLQTGGEVVAYVW</sequence>